<evidence type="ECO:0000255" key="1">
    <source>
        <dbReference type="HAMAP-Rule" id="MF_01595"/>
    </source>
</evidence>
<evidence type="ECO:0000256" key="2">
    <source>
        <dbReference type="SAM" id="MobiDB-lite"/>
    </source>
</evidence>
<dbReference type="EC" id="2.7.7.8" evidence="1"/>
<dbReference type="EMBL" id="AM942759">
    <property type="protein sequence ID" value="CAR46710.1"/>
    <property type="molecule type" value="Genomic_DNA"/>
</dbReference>
<dbReference type="RefSeq" id="WP_004246234.1">
    <property type="nucleotide sequence ID" value="NC_010554.1"/>
</dbReference>
<dbReference type="SMR" id="B4F2C3"/>
<dbReference type="EnsemblBacteria" id="CAR46710">
    <property type="protein sequence ID" value="CAR46710"/>
    <property type="gene ID" value="PMI3422"/>
</dbReference>
<dbReference type="GeneID" id="6800401"/>
<dbReference type="KEGG" id="pmr:PMI3422"/>
<dbReference type="eggNOG" id="COG1185">
    <property type="taxonomic scope" value="Bacteria"/>
</dbReference>
<dbReference type="HOGENOM" id="CLU_004217_2_2_6"/>
<dbReference type="Proteomes" id="UP000008319">
    <property type="component" value="Chromosome"/>
</dbReference>
<dbReference type="GO" id="GO:0005829">
    <property type="term" value="C:cytosol"/>
    <property type="evidence" value="ECO:0007669"/>
    <property type="project" value="TreeGrafter"/>
</dbReference>
<dbReference type="GO" id="GO:0000175">
    <property type="term" value="F:3'-5'-RNA exonuclease activity"/>
    <property type="evidence" value="ECO:0007669"/>
    <property type="project" value="TreeGrafter"/>
</dbReference>
<dbReference type="GO" id="GO:0000287">
    <property type="term" value="F:magnesium ion binding"/>
    <property type="evidence" value="ECO:0007669"/>
    <property type="project" value="UniProtKB-UniRule"/>
</dbReference>
<dbReference type="GO" id="GO:0004654">
    <property type="term" value="F:polyribonucleotide nucleotidyltransferase activity"/>
    <property type="evidence" value="ECO:0007669"/>
    <property type="project" value="UniProtKB-UniRule"/>
</dbReference>
<dbReference type="GO" id="GO:0003723">
    <property type="term" value="F:RNA binding"/>
    <property type="evidence" value="ECO:0007669"/>
    <property type="project" value="UniProtKB-UniRule"/>
</dbReference>
<dbReference type="GO" id="GO:0006402">
    <property type="term" value="P:mRNA catabolic process"/>
    <property type="evidence" value="ECO:0007669"/>
    <property type="project" value="UniProtKB-UniRule"/>
</dbReference>
<dbReference type="GO" id="GO:0006396">
    <property type="term" value="P:RNA processing"/>
    <property type="evidence" value="ECO:0007669"/>
    <property type="project" value="InterPro"/>
</dbReference>
<dbReference type="CDD" id="cd02393">
    <property type="entry name" value="KH-I_PNPase"/>
    <property type="match status" value="1"/>
</dbReference>
<dbReference type="CDD" id="cd11363">
    <property type="entry name" value="RNase_PH_PNPase_1"/>
    <property type="match status" value="1"/>
</dbReference>
<dbReference type="CDD" id="cd11364">
    <property type="entry name" value="RNase_PH_PNPase_2"/>
    <property type="match status" value="1"/>
</dbReference>
<dbReference type="CDD" id="cd04472">
    <property type="entry name" value="S1_PNPase"/>
    <property type="match status" value="1"/>
</dbReference>
<dbReference type="FunFam" id="2.40.50.140:FF:000023">
    <property type="entry name" value="Polyribonucleotide nucleotidyltransferase"/>
    <property type="match status" value="1"/>
</dbReference>
<dbReference type="FunFam" id="3.30.1370.10:FF:000001">
    <property type="entry name" value="Polyribonucleotide nucleotidyltransferase"/>
    <property type="match status" value="1"/>
</dbReference>
<dbReference type="FunFam" id="3.30.230.70:FF:000001">
    <property type="entry name" value="Polyribonucleotide nucleotidyltransferase"/>
    <property type="match status" value="1"/>
</dbReference>
<dbReference type="FunFam" id="3.30.230.70:FF:000002">
    <property type="entry name" value="Polyribonucleotide nucleotidyltransferase"/>
    <property type="match status" value="1"/>
</dbReference>
<dbReference type="Gene3D" id="3.30.230.70">
    <property type="entry name" value="GHMP Kinase, N-terminal domain"/>
    <property type="match status" value="2"/>
</dbReference>
<dbReference type="Gene3D" id="3.30.1370.10">
    <property type="entry name" value="K Homology domain, type 1"/>
    <property type="match status" value="1"/>
</dbReference>
<dbReference type="Gene3D" id="2.40.50.140">
    <property type="entry name" value="Nucleic acid-binding proteins"/>
    <property type="match status" value="1"/>
</dbReference>
<dbReference type="HAMAP" id="MF_01595">
    <property type="entry name" value="PNPase"/>
    <property type="match status" value="1"/>
</dbReference>
<dbReference type="InterPro" id="IPR001247">
    <property type="entry name" value="ExoRNase_PH_dom1"/>
</dbReference>
<dbReference type="InterPro" id="IPR015847">
    <property type="entry name" value="ExoRNase_PH_dom2"/>
</dbReference>
<dbReference type="InterPro" id="IPR036345">
    <property type="entry name" value="ExoRNase_PH_dom2_sf"/>
</dbReference>
<dbReference type="InterPro" id="IPR004087">
    <property type="entry name" value="KH_dom"/>
</dbReference>
<dbReference type="InterPro" id="IPR004088">
    <property type="entry name" value="KH_dom_type_1"/>
</dbReference>
<dbReference type="InterPro" id="IPR036612">
    <property type="entry name" value="KH_dom_type_1_sf"/>
</dbReference>
<dbReference type="InterPro" id="IPR012340">
    <property type="entry name" value="NA-bd_OB-fold"/>
</dbReference>
<dbReference type="InterPro" id="IPR012162">
    <property type="entry name" value="PNPase"/>
</dbReference>
<dbReference type="InterPro" id="IPR027408">
    <property type="entry name" value="PNPase/RNase_PH_dom_sf"/>
</dbReference>
<dbReference type="InterPro" id="IPR015848">
    <property type="entry name" value="PNPase_PH_RNA-bd_bac/org-type"/>
</dbReference>
<dbReference type="InterPro" id="IPR036456">
    <property type="entry name" value="PNPase_PH_RNA-bd_sf"/>
</dbReference>
<dbReference type="InterPro" id="IPR020568">
    <property type="entry name" value="Ribosomal_Su5_D2-typ_SF"/>
</dbReference>
<dbReference type="InterPro" id="IPR003029">
    <property type="entry name" value="S1_domain"/>
</dbReference>
<dbReference type="NCBIfam" id="TIGR03591">
    <property type="entry name" value="polynuc_phos"/>
    <property type="match status" value="1"/>
</dbReference>
<dbReference type="NCBIfam" id="NF008805">
    <property type="entry name" value="PRK11824.1"/>
    <property type="match status" value="1"/>
</dbReference>
<dbReference type="PANTHER" id="PTHR11252">
    <property type="entry name" value="POLYRIBONUCLEOTIDE NUCLEOTIDYLTRANSFERASE"/>
    <property type="match status" value="1"/>
</dbReference>
<dbReference type="PANTHER" id="PTHR11252:SF0">
    <property type="entry name" value="POLYRIBONUCLEOTIDE NUCLEOTIDYLTRANSFERASE 1, MITOCHONDRIAL"/>
    <property type="match status" value="1"/>
</dbReference>
<dbReference type="Pfam" id="PF00013">
    <property type="entry name" value="KH_1"/>
    <property type="match status" value="1"/>
</dbReference>
<dbReference type="Pfam" id="PF03726">
    <property type="entry name" value="PNPase"/>
    <property type="match status" value="1"/>
</dbReference>
<dbReference type="Pfam" id="PF01138">
    <property type="entry name" value="RNase_PH"/>
    <property type="match status" value="2"/>
</dbReference>
<dbReference type="Pfam" id="PF03725">
    <property type="entry name" value="RNase_PH_C"/>
    <property type="match status" value="2"/>
</dbReference>
<dbReference type="Pfam" id="PF00575">
    <property type="entry name" value="S1"/>
    <property type="match status" value="1"/>
</dbReference>
<dbReference type="PIRSF" id="PIRSF005499">
    <property type="entry name" value="PNPase"/>
    <property type="match status" value="1"/>
</dbReference>
<dbReference type="SMART" id="SM00322">
    <property type="entry name" value="KH"/>
    <property type="match status" value="1"/>
</dbReference>
<dbReference type="SMART" id="SM00316">
    <property type="entry name" value="S1"/>
    <property type="match status" value="1"/>
</dbReference>
<dbReference type="SUPFAM" id="SSF54791">
    <property type="entry name" value="Eukaryotic type KH-domain (KH-domain type I)"/>
    <property type="match status" value="1"/>
</dbReference>
<dbReference type="SUPFAM" id="SSF50249">
    <property type="entry name" value="Nucleic acid-binding proteins"/>
    <property type="match status" value="1"/>
</dbReference>
<dbReference type="SUPFAM" id="SSF46915">
    <property type="entry name" value="Polynucleotide phosphorylase/guanosine pentaphosphate synthase (PNPase/GPSI), domain 3"/>
    <property type="match status" value="1"/>
</dbReference>
<dbReference type="SUPFAM" id="SSF55666">
    <property type="entry name" value="Ribonuclease PH domain 2-like"/>
    <property type="match status" value="2"/>
</dbReference>
<dbReference type="SUPFAM" id="SSF54211">
    <property type="entry name" value="Ribosomal protein S5 domain 2-like"/>
    <property type="match status" value="2"/>
</dbReference>
<dbReference type="PROSITE" id="PS50084">
    <property type="entry name" value="KH_TYPE_1"/>
    <property type="match status" value="1"/>
</dbReference>
<dbReference type="PROSITE" id="PS50126">
    <property type="entry name" value="S1"/>
    <property type="match status" value="1"/>
</dbReference>
<protein>
    <recommendedName>
        <fullName evidence="1">Polyribonucleotide nucleotidyltransferase</fullName>
        <ecNumber evidence="1">2.7.7.8</ecNumber>
    </recommendedName>
    <alternativeName>
        <fullName evidence="1">Polynucleotide phosphorylase</fullName>
        <shortName evidence="1">PNPase</shortName>
    </alternativeName>
</protein>
<comment type="function">
    <text evidence="1">Involved in mRNA degradation. Catalyzes the phosphorolysis of single-stranded polyribonucleotides processively in the 3'- to 5'-direction.</text>
</comment>
<comment type="catalytic activity">
    <reaction evidence="1">
        <text>RNA(n+1) + phosphate = RNA(n) + a ribonucleoside 5'-diphosphate</text>
        <dbReference type="Rhea" id="RHEA:22096"/>
        <dbReference type="Rhea" id="RHEA-COMP:14527"/>
        <dbReference type="Rhea" id="RHEA-COMP:17342"/>
        <dbReference type="ChEBI" id="CHEBI:43474"/>
        <dbReference type="ChEBI" id="CHEBI:57930"/>
        <dbReference type="ChEBI" id="CHEBI:140395"/>
        <dbReference type="EC" id="2.7.7.8"/>
    </reaction>
</comment>
<comment type="cofactor">
    <cofactor evidence="1">
        <name>Mg(2+)</name>
        <dbReference type="ChEBI" id="CHEBI:18420"/>
    </cofactor>
</comment>
<comment type="subunit">
    <text evidence="1">Component of the RNA degradosome, which is a multiprotein complex involved in RNA processing and mRNA degradation.</text>
</comment>
<comment type="subcellular location">
    <subcellularLocation>
        <location evidence="1">Cytoplasm</location>
    </subcellularLocation>
</comment>
<comment type="similarity">
    <text evidence="1">Belongs to the polyribonucleotide nucleotidyltransferase family.</text>
</comment>
<reference key="1">
    <citation type="journal article" date="2008" name="J. Bacteriol.">
        <title>Complete genome sequence of uropathogenic Proteus mirabilis, a master of both adherence and motility.</title>
        <authorList>
            <person name="Pearson M.M."/>
            <person name="Sebaihia M."/>
            <person name="Churcher C."/>
            <person name="Quail M.A."/>
            <person name="Seshasayee A.S."/>
            <person name="Luscombe N.M."/>
            <person name="Abdellah Z."/>
            <person name="Arrosmith C."/>
            <person name="Atkin B."/>
            <person name="Chillingworth T."/>
            <person name="Hauser H."/>
            <person name="Jagels K."/>
            <person name="Moule S."/>
            <person name="Mungall K."/>
            <person name="Norbertczak H."/>
            <person name="Rabbinowitsch E."/>
            <person name="Walker D."/>
            <person name="Whithead S."/>
            <person name="Thomson N.R."/>
            <person name="Rather P.N."/>
            <person name="Parkhill J."/>
            <person name="Mobley H.L.T."/>
        </authorList>
    </citation>
    <scope>NUCLEOTIDE SEQUENCE [LARGE SCALE GENOMIC DNA]</scope>
    <source>
        <strain>HI4320</strain>
    </source>
</reference>
<sequence length="709" mass="76869">MLNPTVRKFQYGQHTVTLETGMMARQATAAVMVDMDGTAVFVTVVAKKKVKEGQDFFPLTVNYQERSYAAGRIPGSFFRREGRPGEGETLIARLIDRPLRPLFPEGFLNEIQVVATVVSVNPQVNPDIVAMIGASAALSLSGVPFNGPIGGARVGFIDGQYVLNPTVDELKISKLDLVVAGTAGAVLMVESEADLLSEEQMLGAVVFGHEQQQVVIENINALVAEVGKEKWDWAPEPINQSLHDRIAQLAQTRIGDAYRITEKQERYEQIDAIRDEVISTLLAEDESLDEGEIIEIFSGLEKKIVRARVLAGEPRIDGREKDMVRALDIRTGLLPRTHGSALFTRGETQALVTATLGTARDAQTIDDIMGEHTDTFLLHYNFPPYSVGETGMMGSPKRREIGHGRLAKRGVLAVMPTIEEFPYTVRVVSEITESNGSSSMASVCGASLALMDAGVPIKESVAGIAMGLVKEGENFVVLSDILGDEDHLGDMDFKVAGSRNGVSALQMDIKIEGITREIMQVALNQAKSARLHILGVMESAISQPRAEISEFAPRIHTIKINADKIKDVIGKGGSVIRALTEETGTTIEIEDDGTVKIAATSGEQAKQAIARIEEITAEVEVGRIYNGKVTRIVDFGAFVAIGGGKEGLVHISQIADKRVEKVSDYLTMGQEVPVKVLEIDRQGRIRLSMKEAQATQQEAAETSSEDPAN</sequence>
<feature type="chain" id="PRO_1000147945" description="Polyribonucleotide nucleotidyltransferase">
    <location>
        <begin position="1"/>
        <end position="709"/>
    </location>
</feature>
<feature type="domain" description="KH" evidence="1">
    <location>
        <begin position="553"/>
        <end position="612"/>
    </location>
</feature>
<feature type="domain" description="S1 motif" evidence="1">
    <location>
        <begin position="622"/>
        <end position="690"/>
    </location>
</feature>
<feature type="region of interest" description="Disordered" evidence="2">
    <location>
        <begin position="690"/>
        <end position="709"/>
    </location>
</feature>
<feature type="compositionally biased region" description="Low complexity" evidence="2">
    <location>
        <begin position="691"/>
        <end position="702"/>
    </location>
</feature>
<feature type="binding site" evidence="1">
    <location>
        <position position="486"/>
    </location>
    <ligand>
        <name>Mg(2+)</name>
        <dbReference type="ChEBI" id="CHEBI:18420"/>
    </ligand>
</feature>
<feature type="binding site" evidence="1">
    <location>
        <position position="492"/>
    </location>
    <ligand>
        <name>Mg(2+)</name>
        <dbReference type="ChEBI" id="CHEBI:18420"/>
    </ligand>
</feature>
<keyword id="KW-0963">Cytoplasm</keyword>
<keyword id="KW-0460">Magnesium</keyword>
<keyword id="KW-0479">Metal-binding</keyword>
<keyword id="KW-0548">Nucleotidyltransferase</keyword>
<keyword id="KW-1185">Reference proteome</keyword>
<keyword id="KW-0694">RNA-binding</keyword>
<keyword id="KW-0808">Transferase</keyword>
<gene>
    <name evidence="1" type="primary">pnp</name>
    <name type="ordered locus">PMI3422</name>
</gene>
<organism>
    <name type="scientific">Proteus mirabilis (strain HI4320)</name>
    <dbReference type="NCBI Taxonomy" id="529507"/>
    <lineage>
        <taxon>Bacteria</taxon>
        <taxon>Pseudomonadati</taxon>
        <taxon>Pseudomonadota</taxon>
        <taxon>Gammaproteobacteria</taxon>
        <taxon>Enterobacterales</taxon>
        <taxon>Morganellaceae</taxon>
        <taxon>Proteus</taxon>
    </lineage>
</organism>
<name>PNP_PROMH</name>
<accession>B4F2C3</accession>
<proteinExistence type="inferred from homology"/>